<sequence length="357" mass="40251">MATTVPDGCRNGLKSKYYRLCDKAEAWGIVLETVATAGVVTSVAFMLTLPILVCKVQDSNRRKMLPTQFLFLLGVLGIFGLTFAFIIGLDGSTGPTRFFLFGILFSICFSCLLAHAVSLTKLVRGRKPLSLLVILGLAVGFSLVQDVIAIEYIVLTMNRTNVNVFSELSAPRRNEDFVLLLTYVLFLMALTFLMSSFTFCGSFTGWKRHGAHIYLTMLLSIAIWVAWITLLMLPDFDRRWDDTILSSALAANGWVFLLAYVSPEFWLLTKQRNPMDYPVEDAFCKPQLVKKSYGVENRAYSQEEITQGFEETGDTLYAPYSTHFQLQNQPPQKEFSIPRAHAWPSPYKDYEVKKEGS</sequence>
<proteinExistence type="evidence at protein level"/>
<protein>
    <recommendedName>
        <fullName>Retinoic acid-induced protein 3</fullName>
    </recommendedName>
    <alternativeName>
        <fullName>G-protein coupled receptor family C group 5 member A</fullName>
    </alternativeName>
    <alternativeName>
        <fullName evidence="8">Phorbol ester induced gene 1</fullName>
        <shortName>PEIG-1</shortName>
    </alternativeName>
    <alternativeName>
        <fullName>Retinoic acid-induced gene 1 protein</fullName>
        <shortName>RAIG-1</shortName>
    </alternativeName>
</protein>
<keyword id="KW-1003">Cell membrane</keyword>
<keyword id="KW-0968">Cytoplasmic vesicle</keyword>
<keyword id="KW-0297">G-protein coupled receptor</keyword>
<keyword id="KW-0325">Glycoprotein</keyword>
<keyword id="KW-0472">Membrane</keyword>
<keyword id="KW-0597">Phosphoprotein</keyword>
<keyword id="KW-1267">Proteomics identification</keyword>
<keyword id="KW-0675">Receptor</keyword>
<keyword id="KW-1185">Reference proteome</keyword>
<keyword id="KW-0807">Transducer</keyword>
<keyword id="KW-0812">Transmembrane</keyword>
<keyword id="KW-1133">Transmembrane helix</keyword>
<keyword id="KW-0043">Tumor suppressor</keyword>
<evidence type="ECO:0000250" key="1">
    <source>
        <dbReference type="UniProtKB" id="Q8BHL4"/>
    </source>
</evidence>
<evidence type="ECO:0000255" key="2"/>
<evidence type="ECO:0000269" key="3">
    <source>
    </source>
</evidence>
<evidence type="ECO:0000269" key="4">
    <source>
    </source>
</evidence>
<evidence type="ECO:0000269" key="5">
    <source>
    </source>
</evidence>
<evidence type="ECO:0000269" key="6">
    <source>
    </source>
</evidence>
<evidence type="ECO:0000269" key="7">
    <source>
    </source>
</evidence>
<evidence type="ECO:0000303" key="8">
    <source>
    </source>
</evidence>
<evidence type="ECO:0000305" key="9"/>
<evidence type="ECO:0007744" key="10">
    <source>
    </source>
</evidence>
<evidence type="ECO:0007744" key="11">
    <source>
    </source>
</evidence>
<evidence type="ECO:0007744" key="12">
    <source>
    </source>
</evidence>
<reference key="1">
    <citation type="journal article" date="1996" name="Cell. Mol. Biol.">
        <title>Identification by differential display of a mRNA specifically induced by 12-O-tetradecanoylphorbol-13-acetate (TPA) in T84 human colon carcinoma cells.</title>
        <authorList>
            <person name="Cafferata E.G."/>
            <person name="Gonzalez-Guerrico A.M."/>
            <person name="Pivetta O.H."/>
            <person name="Santa-Coloma T.A."/>
        </authorList>
    </citation>
    <scope>NUCLEOTIDE SEQUENCE [MRNA]</scope>
    <source>
        <tissue>Colon carcinoma</tissue>
    </source>
</reference>
<reference key="2">
    <citation type="journal article" date="1998" name="J. Biol. Chem.">
        <title>Molecular cloning and characterization of a novel retinoic acid-inducible gene that encodes a putative G protein-coupled receptor.</title>
        <authorList>
            <person name="Cheng Y."/>
            <person name="Lotan R."/>
        </authorList>
    </citation>
    <scope>NUCLEOTIDE SEQUENCE [MRNA]</scope>
    <scope>SUBCELLULAR LOCATION</scope>
    <scope>INDUCTION</scope>
    <scope>TISSUE SPECIFICITY</scope>
    <source>
        <tissue>Lung</tissue>
    </source>
</reference>
<reference key="3">
    <citation type="journal article" date="2004" name="Nat. Genet.">
        <title>Complete sequencing and characterization of 21,243 full-length human cDNAs.</title>
        <authorList>
            <person name="Ota T."/>
            <person name="Suzuki Y."/>
            <person name="Nishikawa T."/>
            <person name="Otsuki T."/>
            <person name="Sugiyama T."/>
            <person name="Irie R."/>
            <person name="Wakamatsu A."/>
            <person name="Hayashi K."/>
            <person name="Sato H."/>
            <person name="Nagai K."/>
            <person name="Kimura K."/>
            <person name="Makita H."/>
            <person name="Sekine M."/>
            <person name="Obayashi M."/>
            <person name="Nishi T."/>
            <person name="Shibahara T."/>
            <person name="Tanaka T."/>
            <person name="Ishii S."/>
            <person name="Yamamoto J."/>
            <person name="Saito K."/>
            <person name="Kawai Y."/>
            <person name="Isono Y."/>
            <person name="Nakamura Y."/>
            <person name="Nagahari K."/>
            <person name="Murakami K."/>
            <person name="Yasuda T."/>
            <person name="Iwayanagi T."/>
            <person name="Wagatsuma M."/>
            <person name="Shiratori A."/>
            <person name="Sudo H."/>
            <person name="Hosoiri T."/>
            <person name="Kaku Y."/>
            <person name="Kodaira H."/>
            <person name="Kondo H."/>
            <person name="Sugawara M."/>
            <person name="Takahashi M."/>
            <person name="Kanda K."/>
            <person name="Yokoi T."/>
            <person name="Furuya T."/>
            <person name="Kikkawa E."/>
            <person name="Omura Y."/>
            <person name="Abe K."/>
            <person name="Kamihara K."/>
            <person name="Katsuta N."/>
            <person name="Sato K."/>
            <person name="Tanikawa M."/>
            <person name="Yamazaki M."/>
            <person name="Ninomiya K."/>
            <person name="Ishibashi T."/>
            <person name="Yamashita H."/>
            <person name="Murakawa K."/>
            <person name="Fujimori K."/>
            <person name="Tanai H."/>
            <person name="Kimata M."/>
            <person name="Watanabe M."/>
            <person name="Hiraoka S."/>
            <person name="Chiba Y."/>
            <person name="Ishida S."/>
            <person name="Ono Y."/>
            <person name="Takiguchi S."/>
            <person name="Watanabe S."/>
            <person name="Yosida M."/>
            <person name="Hotuta T."/>
            <person name="Kusano J."/>
            <person name="Kanehori K."/>
            <person name="Takahashi-Fujii A."/>
            <person name="Hara H."/>
            <person name="Tanase T.-O."/>
            <person name="Nomura Y."/>
            <person name="Togiya S."/>
            <person name="Komai F."/>
            <person name="Hara R."/>
            <person name="Takeuchi K."/>
            <person name="Arita M."/>
            <person name="Imose N."/>
            <person name="Musashino K."/>
            <person name="Yuuki H."/>
            <person name="Oshima A."/>
            <person name="Sasaki N."/>
            <person name="Aotsuka S."/>
            <person name="Yoshikawa Y."/>
            <person name="Matsunawa H."/>
            <person name="Ichihara T."/>
            <person name="Shiohata N."/>
            <person name="Sano S."/>
            <person name="Moriya S."/>
            <person name="Momiyama H."/>
            <person name="Satoh N."/>
            <person name="Takami S."/>
            <person name="Terashima Y."/>
            <person name="Suzuki O."/>
            <person name="Nakagawa S."/>
            <person name="Senoh A."/>
            <person name="Mizoguchi H."/>
            <person name="Goto Y."/>
            <person name="Shimizu F."/>
            <person name="Wakebe H."/>
            <person name="Hishigaki H."/>
            <person name="Watanabe T."/>
            <person name="Sugiyama A."/>
            <person name="Takemoto M."/>
            <person name="Kawakami B."/>
            <person name="Yamazaki M."/>
            <person name="Watanabe K."/>
            <person name="Kumagai A."/>
            <person name="Itakura S."/>
            <person name="Fukuzumi Y."/>
            <person name="Fujimori Y."/>
            <person name="Komiyama M."/>
            <person name="Tashiro H."/>
            <person name="Tanigami A."/>
            <person name="Fujiwara T."/>
            <person name="Ono T."/>
            <person name="Yamada K."/>
            <person name="Fujii Y."/>
            <person name="Ozaki K."/>
            <person name="Hirao M."/>
            <person name="Ohmori Y."/>
            <person name="Kawabata A."/>
            <person name="Hikiji T."/>
            <person name="Kobatake N."/>
            <person name="Inagaki H."/>
            <person name="Ikema Y."/>
            <person name="Okamoto S."/>
            <person name="Okitani R."/>
            <person name="Kawakami T."/>
            <person name="Noguchi S."/>
            <person name="Itoh T."/>
            <person name="Shigeta K."/>
            <person name="Senba T."/>
            <person name="Matsumura K."/>
            <person name="Nakajima Y."/>
            <person name="Mizuno T."/>
            <person name="Morinaga M."/>
            <person name="Sasaki M."/>
            <person name="Togashi T."/>
            <person name="Oyama M."/>
            <person name="Hata H."/>
            <person name="Watanabe M."/>
            <person name="Komatsu T."/>
            <person name="Mizushima-Sugano J."/>
            <person name="Satoh T."/>
            <person name="Shirai Y."/>
            <person name="Takahashi Y."/>
            <person name="Nakagawa K."/>
            <person name="Okumura K."/>
            <person name="Nagase T."/>
            <person name="Nomura N."/>
            <person name="Kikuchi H."/>
            <person name="Masuho Y."/>
            <person name="Yamashita R."/>
            <person name="Nakai K."/>
            <person name="Yada T."/>
            <person name="Nakamura Y."/>
            <person name="Ohara O."/>
            <person name="Isogai T."/>
            <person name="Sugano S."/>
        </authorList>
    </citation>
    <scope>NUCLEOTIDE SEQUENCE [LARGE SCALE MRNA]</scope>
</reference>
<reference key="4">
    <citation type="submission" date="2005-07" db="EMBL/GenBank/DDBJ databases">
        <authorList>
            <person name="Mural R.J."/>
            <person name="Istrail S."/>
            <person name="Sutton G.G."/>
            <person name="Florea L."/>
            <person name="Halpern A.L."/>
            <person name="Mobarry C.M."/>
            <person name="Lippert R."/>
            <person name="Walenz B."/>
            <person name="Shatkay H."/>
            <person name="Dew I."/>
            <person name="Miller J.R."/>
            <person name="Flanigan M.J."/>
            <person name="Edwards N.J."/>
            <person name="Bolanos R."/>
            <person name="Fasulo D."/>
            <person name="Halldorsson B.V."/>
            <person name="Hannenhalli S."/>
            <person name="Turner R."/>
            <person name="Yooseph S."/>
            <person name="Lu F."/>
            <person name="Nusskern D.R."/>
            <person name="Shue B.C."/>
            <person name="Zheng X.H."/>
            <person name="Zhong F."/>
            <person name="Delcher A.L."/>
            <person name="Huson D.H."/>
            <person name="Kravitz S.A."/>
            <person name="Mouchard L."/>
            <person name="Reinert K."/>
            <person name="Remington K.A."/>
            <person name="Clark A.G."/>
            <person name="Waterman M.S."/>
            <person name="Eichler E.E."/>
            <person name="Adams M.D."/>
            <person name="Hunkapiller M.W."/>
            <person name="Myers E.W."/>
            <person name="Venter J.C."/>
        </authorList>
    </citation>
    <scope>NUCLEOTIDE SEQUENCE [LARGE SCALE GENOMIC DNA]</scope>
</reference>
<reference key="5">
    <citation type="journal article" date="2004" name="Genome Res.">
        <title>The status, quality, and expansion of the NIH full-length cDNA project: the Mammalian Gene Collection (MGC).</title>
        <authorList>
            <consortium name="The MGC Project Team"/>
        </authorList>
    </citation>
    <scope>NUCLEOTIDE SEQUENCE [LARGE SCALE MRNA]</scope>
    <source>
        <tissue>Colon</tissue>
    </source>
</reference>
<reference key="6">
    <citation type="journal article" date="2000" name="Genomics">
        <title>Sequence and expression pattern of a novel human orphan G-protein-coupled receptor, GPRC5B, a family C receptor with a short amino-terminal domain.</title>
        <authorList>
            <person name="Braeuner-Osborne H."/>
            <person name="Krogsgaard-Larsen P."/>
        </authorList>
    </citation>
    <scope>TISSUE SPECIFICITY</scope>
</reference>
<reference key="7">
    <citation type="journal article" date="2000" name="Genomics">
        <title>Molecular cloning and characterization of two novel retinoic acid-inducible orphan G-protein-coupled receptors (GPRC5B and GPRC5C).</title>
        <authorList>
            <person name="Robbins M.J."/>
            <person name="Michalovich D."/>
            <person name="Hill J."/>
            <person name="Calver A.R."/>
            <person name="Medhurst A.D."/>
            <person name="Gloger I."/>
            <person name="Sims M.A."/>
            <person name="Middlemiss D.N."/>
            <person name="Pangalos M.N."/>
        </authorList>
    </citation>
    <scope>TISSUE SPECIFICITY</scope>
</reference>
<reference key="8">
    <citation type="journal article" date="2007" name="J. Natl. Cancer Inst.">
        <title>Identification of the retinoic acid-inducible Gprc5a as a new lung tumor suppressor gene.</title>
        <authorList>
            <person name="Tao Q."/>
            <person name="Fujimoto J."/>
            <person name="Men T."/>
            <person name="Ye X."/>
            <person name="Deng J."/>
            <person name="Lacroix L."/>
            <person name="Clifford J.L."/>
            <person name="Mao L."/>
            <person name="Van Pelt C.S."/>
            <person name="Lee J.J."/>
            <person name="Lotan D."/>
            <person name="Lotan R."/>
        </authorList>
    </citation>
    <scope>TISSUE SPECIFICITY</scope>
    <scope>SUBCELLULAR LOCATION</scope>
    <scope>FUNCTION</scope>
</reference>
<reference key="9">
    <citation type="journal article" date="2007" name="J. Proteome Res.">
        <title>Improved titanium dioxide enrichment of phosphopeptides from HeLa cells and high confident phosphopeptide identification by cross-validation of MS/MS and MS/MS/MS spectra.</title>
        <authorList>
            <person name="Yu L.R."/>
            <person name="Zhu Z."/>
            <person name="Chan K.C."/>
            <person name="Issaq H.J."/>
            <person name="Dimitrov D.S."/>
            <person name="Veenstra T.D."/>
        </authorList>
    </citation>
    <scope>IDENTIFICATION BY MASS SPECTROMETRY [LARGE SCALE ANALYSIS]</scope>
    <source>
        <tissue>Cervix carcinoma</tissue>
    </source>
</reference>
<reference key="10">
    <citation type="journal article" date="2008" name="Mol. Cell">
        <title>Kinase-selective enrichment enables quantitative phosphoproteomics of the kinome across the cell cycle.</title>
        <authorList>
            <person name="Daub H."/>
            <person name="Olsen J.V."/>
            <person name="Bairlein M."/>
            <person name="Gnad F."/>
            <person name="Oppermann F.S."/>
            <person name="Korner R."/>
            <person name="Greff Z."/>
            <person name="Keri G."/>
            <person name="Stemmann O."/>
            <person name="Mann M."/>
        </authorList>
    </citation>
    <scope>IDENTIFICATION BY MASS SPECTROMETRY [LARGE SCALE ANALYSIS]</scope>
    <source>
        <tissue>Cervix carcinoma</tissue>
    </source>
</reference>
<reference key="11">
    <citation type="journal article" date="2008" name="Proc. Natl. Acad. Sci. U.S.A.">
        <title>A quantitative atlas of mitotic phosphorylation.</title>
        <authorList>
            <person name="Dephoure N."/>
            <person name="Zhou C."/>
            <person name="Villen J."/>
            <person name="Beausoleil S.A."/>
            <person name="Bakalarski C.E."/>
            <person name="Elledge S.J."/>
            <person name="Gygi S.P."/>
        </authorList>
    </citation>
    <scope>PHOSPHORYLATION [LARGE SCALE ANALYSIS] AT SER-345</scope>
    <scope>IDENTIFICATION BY MASS SPECTROMETRY [LARGE SCALE ANALYSIS]</scope>
    <source>
        <tissue>Cervix carcinoma</tissue>
    </source>
</reference>
<reference key="12">
    <citation type="journal article" date="2010" name="Sci. Signal.">
        <title>Quantitative phosphoproteomics reveals widespread full phosphorylation site occupancy during mitosis.</title>
        <authorList>
            <person name="Olsen J.V."/>
            <person name="Vermeulen M."/>
            <person name="Santamaria A."/>
            <person name="Kumar C."/>
            <person name="Miller M.L."/>
            <person name="Jensen L.J."/>
            <person name="Gnad F."/>
            <person name="Cox J."/>
            <person name="Jensen T.S."/>
            <person name="Nigg E.A."/>
            <person name="Brunak S."/>
            <person name="Mann M."/>
        </authorList>
    </citation>
    <scope>PHOSPHORYLATION [LARGE SCALE ANALYSIS] AT SER-301 AND SER-345</scope>
    <scope>IDENTIFICATION BY MASS SPECTROMETRY [LARGE SCALE ANALYSIS]</scope>
    <source>
        <tissue>Cervix carcinoma</tissue>
    </source>
</reference>
<reference key="13">
    <citation type="journal article" date="2011" name="BMC Syst. Biol.">
        <title>Initial characterization of the human central proteome.</title>
        <authorList>
            <person name="Burkard T.R."/>
            <person name="Planyavsky M."/>
            <person name="Kaupe I."/>
            <person name="Breitwieser F.P."/>
            <person name="Buerckstuemmer T."/>
            <person name="Bennett K.L."/>
            <person name="Superti-Furga G."/>
            <person name="Colinge J."/>
        </authorList>
    </citation>
    <scope>IDENTIFICATION BY MASS SPECTROMETRY [LARGE SCALE ANALYSIS]</scope>
</reference>
<reference key="14">
    <citation type="journal article" date="2013" name="J. Proteome Res.">
        <title>Toward a comprehensive characterization of a human cancer cell phosphoproteome.</title>
        <authorList>
            <person name="Zhou H."/>
            <person name="Di Palma S."/>
            <person name="Preisinger C."/>
            <person name="Peng M."/>
            <person name="Polat A.N."/>
            <person name="Heck A.J."/>
            <person name="Mohammed S."/>
        </authorList>
    </citation>
    <scope>PHOSPHORYLATION [LARGE SCALE ANALYSIS] AT SER-345 AND TYR-347</scope>
    <scope>IDENTIFICATION BY MASS SPECTROMETRY [LARGE SCALE ANALYSIS]</scope>
    <source>
        <tissue>Cervix carcinoma</tissue>
    </source>
</reference>
<reference key="15">
    <citation type="journal article" date="2014" name="Mol. Cancer">
        <title>EGFR phosphorylates and inhibits lung tumor suppressor GPRC5A in lung cancer.</title>
        <authorList>
            <person name="Lin X."/>
            <person name="Zhong S."/>
            <person name="Ye X."/>
            <person name="Liao Y."/>
            <person name="Yao F."/>
            <person name="Yang X."/>
            <person name="Sun B."/>
            <person name="Zhang J."/>
            <person name="Li Q."/>
            <person name="Gao Y."/>
            <person name="Wang Y."/>
            <person name="Liu J."/>
            <person name="Han B."/>
            <person name="Chin Y.E."/>
            <person name="Zhou B.P."/>
            <person name="Deng J."/>
        </authorList>
    </citation>
    <scope>INTERACTION WITH EGFR</scope>
    <scope>PHOSPHORYLATION AT TYR-317; TYR-320; TYR-347 AND TYR-350 BY EGFR</scope>
</reference>
<name>RAI3_HUMAN</name>
<accession>Q8NFJ5</accession>
<accession>B3KV45</accession>
<accession>O95357</accession>
<comment type="function">
    <text evidence="1 5">Orphan receptor. Could be involved in modulating differentiation and maintaining homeostasis of epithelial cells. This retinoic acid-inducible GPCR provide evidence for a possible interaction between retinoid and G-protein signaling pathways. Functions as a negative modulator of EGFR signaling (By similarity). May act as a lung tumor suppressor (PubMed:18000218).</text>
</comment>
<comment type="subunit">
    <text evidence="6">Interacts (via its transmembrane domain) with EGFR.</text>
</comment>
<comment type="subcellular location">
    <subcellularLocation>
        <location evidence="7">Cell membrane</location>
        <topology evidence="2">Multi-pass membrane protein</topology>
    </subcellularLocation>
    <subcellularLocation>
        <location evidence="7">Cytoplasmic vesicle membrane</location>
        <topology evidence="2">Multi-pass membrane protein</topology>
    </subcellularLocation>
    <text evidence="5">Localized in perinuclear vesicles, probably Golgi-associated vesicles.</text>
</comment>
<comment type="tissue specificity">
    <text evidence="3 4 5 7">Expressed at high level in fetal and adult lung tissues but repressed in most human lung cancers (PubMed:18000218, PubMed:9857033). Constitutively expressed in fetal kidney and adult placenta, kidney, prostate, testis, ovary, small intestine, colon, stomach, and spinal cord at low to moderate levels. Not detectable in fetal heart, brain, and liver and adult heart, brain, liver, skeletal muscle, pancreas, spleen, thymus, and peripheral leukocytes. According to PubMed:10783259, expressed at low but detectable level in pancreas and heart.</text>
</comment>
<comment type="induction">
    <text evidence="7">By all-trans retinoic acid (ATRA).</text>
</comment>
<comment type="PTM">
    <text evidence="6">Phosphorylated in two conserved double-tyrosine motifs, Tyr-317/Tyr-320 and Tyr-347/Tyr-350, by EGFR; leading to inactivation of the tumor suppressive function of GPRC5A in lung cancer cells. Tyr-317 and Tyr-320 are the preferred residues responsible for EGFR-mediated GPRC5A phosphorylation.</text>
</comment>
<comment type="similarity">
    <text evidence="9">Belongs to the G-protein coupled receptor 3 family.</text>
</comment>
<dbReference type="EMBL" id="AF506289">
    <property type="protein sequence ID" value="AAM77594.1"/>
    <property type="molecule type" value="mRNA"/>
</dbReference>
<dbReference type="EMBL" id="AF095448">
    <property type="protein sequence ID" value="AAC98506.1"/>
    <property type="molecule type" value="mRNA"/>
</dbReference>
<dbReference type="EMBL" id="AK001761">
    <property type="protein sequence ID" value="BAA91890.1"/>
    <property type="molecule type" value="mRNA"/>
</dbReference>
<dbReference type="EMBL" id="AK122672">
    <property type="protein sequence ID" value="BAG53657.1"/>
    <property type="molecule type" value="mRNA"/>
</dbReference>
<dbReference type="EMBL" id="CH471094">
    <property type="protein sequence ID" value="EAW96289.1"/>
    <property type="molecule type" value="Genomic_DNA"/>
</dbReference>
<dbReference type="EMBL" id="BC003665">
    <property type="protein sequence ID" value="AAH03665.1"/>
    <property type="molecule type" value="mRNA"/>
</dbReference>
<dbReference type="CCDS" id="CCDS8657.1"/>
<dbReference type="RefSeq" id="NP_003970.1">
    <property type="nucleotide sequence ID" value="NM_003979.4"/>
</dbReference>
<dbReference type="SMR" id="Q8NFJ5"/>
<dbReference type="BioGRID" id="114514">
    <property type="interactions" value="94"/>
</dbReference>
<dbReference type="FunCoup" id="Q8NFJ5">
    <property type="interactions" value="391"/>
</dbReference>
<dbReference type="IntAct" id="Q8NFJ5">
    <property type="interactions" value="35"/>
</dbReference>
<dbReference type="MINT" id="Q8NFJ5"/>
<dbReference type="STRING" id="9606.ENSP00000014914"/>
<dbReference type="ChEMBL" id="CHEMBL4523896"/>
<dbReference type="DrugBank" id="DB00755">
    <property type="generic name" value="Tretinoin"/>
</dbReference>
<dbReference type="GlyCosmos" id="Q8NFJ5">
    <property type="glycosylation" value="1 site, No reported glycans"/>
</dbReference>
<dbReference type="GlyGen" id="Q8NFJ5">
    <property type="glycosylation" value="1 site"/>
</dbReference>
<dbReference type="iPTMnet" id="Q8NFJ5"/>
<dbReference type="PhosphoSitePlus" id="Q8NFJ5"/>
<dbReference type="SwissPalm" id="Q8NFJ5"/>
<dbReference type="BioMuta" id="GPRC5A"/>
<dbReference type="DMDM" id="46396943"/>
<dbReference type="jPOST" id="Q8NFJ5"/>
<dbReference type="MassIVE" id="Q8NFJ5"/>
<dbReference type="PaxDb" id="9606-ENSP00000014914"/>
<dbReference type="PeptideAtlas" id="Q8NFJ5"/>
<dbReference type="ProteomicsDB" id="73316"/>
<dbReference type="Pumba" id="Q8NFJ5"/>
<dbReference type="Antibodypedia" id="1914">
    <property type="antibodies" value="416 antibodies from 37 providers"/>
</dbReference>
<dbReference type="DNASU" id="9052"/>
<dbReference type="Ensembl" id="ENST00000014914.6">
    <property type="protein sequence ID" value="ENSP00000014914.6"/>
    <property type="gene ID" value="ENSG00000013588.10"/>
</dbReference>
<dbReference type="Ensembl" id="ENST00000713574.1">
    <property type="protein sequence ID" value="ENSP00000518866.1"/>
    <property type="gene ID" value="ENSG00000013588.10"/>
</dbReference>
<dbReference type="GeneID" id="9052"/>
<dbReference type="KEGG" id="hsa:9052"/>
<dbReference type="MANE-Select" id="ENST00000014914.6">
    <property type="protein sequence ID" value="ENSP00000014914.6"/>
    <property type="RefSeq nucleotide sequence ID" value="NM_003979.4"/>
    <property type="RefSeq protein sequence ID" value="NP_003970.1"/>
</dbReference>
<dbReference type="UCSC" id="uc001rba.4">
    <property type="organism name" value="human"/>
</dbReference>
<dbReference type="AGR" id="HGNC:9836"/>
<dbReference type="CTD" id="9052"/>
<dbReference type="DisGeNET" id="9052"/>
<dbReference type="GeneCards" id="GPRC5A"/>
<dbReference type="HGNC" id="HGNC:9836">
    <property type="gene designation" value="GPRC5A"/>
</dbReference>
<dbReference type="HPA" id="ENSG00000013588">
    <property type="expression patterns" value="Tissue enhanced (lung, urinary bladder)"/>
</dbReference>
<dbReference type="MIM" id="604138">
    <property type="type" value="gene"/>
</dbReference>
<dbReference type="neXtProt" id="NX_Q8NFJ5"/>
<dbReference type="OpenTargets" id="ENSG00000013588"/>
<dbReference type="PharmGKB" id="PA34194"/>
<dbReference type="VEuPathDB" id="HostDB:ENSG00000013588"/>
<dbReference type="eggNOG" id="ENOG502RRIY">
    <property type="taxonomic scope" value="Eukaryota"/>
</dbReference>
<dbReference type="GeneTree" id="ENSGT00950000182961"/>
<dbReference type="HOGENOM" id="CLU_044162_0_0_1"/>
<dbReference type="InParanoid" id="Q8NFJ5"/>
<dbReference type="OMA" id="GRRPNWD"/>
<dbReference type="OrthoDB" id="8701926at2759"/>
<dbReference type="PAN-GO" id="Q8NFJ5">
    <property type="GO annotations" value="5 GO annotations based on evolutionary models"/>
</dbReference>
<dbReference type="PhylomeDB" id="Q8NFJ5"/>
<dbReference type="TreeFam" id="TF321410"/>
<dbReference type="PathwayCommons" id="Q8NFJ5"/>
<dbReference type="SignaLink" id="Q8NFJ5"/>
<dbReference type="BioGRID-ORCS" id="9052">
    <property type="hits" value="21 hits in 1153 CRISPR screens"/>
</dbReference>
<dbReference type="ChiTaRS" id="GPRC5A">
    <property type="organism name" value="human"/>
</dbReference>
<dbReference type="GeneWiki" id="GPRC5A"/>
<dbReference type="GenomeRNAi" id="9052"/>
<dbReference type="Pharos" id="Q8NFJ5">
    <property type="development level" value="Tbio"/>
</dbReference>
<dbReference type="PRO" id="PR:Q8NFJ5"/>
<dbReference type="Proteomes" id="UP000005640">
    <property type="component" value="Chromosome 12"/>
</dbReference>
<dbReference type="RNAct" id="Q8NFJ5">
    <property type="molecule type" value="protein"/>
</dbReference>
<dbReference type="Bgee" id="ENSG00000013588">
    <property type="expression patterns" value="Expressed in amniotic fluid and 161 other cell types or tissues"/>
</dbReference>
<dbReference type="ExpressionAtlas" id="Q8NFJ5">
    <property type="expression patterns" value="baseline and differential"/>
</dbReference>
<dbReference type="GO" id="GO:0030659">
    <property type="term" value="C:cytoplasmic vesicle membrane"/>
    <property type="evidence" value="ECO:0007669"/>
    <property type="project" value="UniProtKB-SubCell"/>
</dbReference>
<dbReference type="GO" id="GO:0070062">
    <property type="term" value="C:extracellular exosome"/>
    <property type="evidence" value="ECO:0007005"/>
    <property type="project" value="UniProtKB"/>
</dbReference>
<dbReference type="GO" id="GO:0043231">
    <property type="term" value="C:intracellular membrane-bounded organelle"/>
    <property type="evidence" value="ECO:0000314"/>
    <property type="project" value="HPA"/>
</dbReference>
<dbReference type="GO" id="GO:0005730">
    <property type="term" value="C:nucleolus"/>
    <property type="evidence" value="ECO:0000314"/>
    <property type="project" value="HPA"/>
</dbReference>
<dbReference type="GO" id="GO:0005886">
    <property type="term" value="C:plasma membrane"/>
    <property type="evidence" value="ECO:0000314"/>
    <property type="project" value="UniProtKB"/>
</dbReference>
<dbReference type="GO" id="GO:0043235">
    <property type="term" value="C:receptor complex"/>
    <property type="evidence" value="ECO:0000318"/>
    <property type="project" value="GO_Central"/>
</dbReference>
<dbReference type="GO" id="GO:0031982">
    <property type="term" value="C:vesicle"/>
    <property type="evidence" value="ECO:0000314"/>
    <property type="project" value="BHF-UCL"/>
</dbReference>
<dbReference type="GO" id="GO:0045296">
    <property type="term" value="F:cadherin binding"/>
    <property type="evidence" value="ECO:0007005"/>
    <property type="project" value="BHF-UCL"/>
</dbReference>
<dbReference type="GO" id="GO:0004930">
    <property type="term" value="F:G protein-coupled receptor activity"/>
    <property type="evidence" value="ECO:0000304"/>
    <property type="project" value="ProtInc"/>
</dbReference>
<dbReference type="GO" id="GO:0030295">
    <property type="term" value="F:protein kinase activator activity"/>
    <property type="evidence" value="ECO:0000318"/>
    <property type="project" value="GO_Central"/>
</dbReference>
<dbReference type="GO" id="GO:0007175">
    <property type="term" value="P:negative regulation of epidermal growth factor-activated receptor activity"/>
    <property type="evidence" value="ECO:0000250"/>
    <property type="project" value="UniProtKB"/>
</dbReference>
<dbReference type="GO" id="GO:0007165">
    <property type="term" value="P:signal transduction"/>
    <property type="evidence" value="ECO:0000304"/>
    <property type="project" value="ProtInc"/>
</dbReference>
<dbReference type="CDD" id="cd15279">
    <property type="entry name" value="7tmC_RAIG1_4_GPRC5A_D"/>
    <property type="match status" value="1"/>
</dbReference>
<dbReference type="InterPro" id="IPR017978">
    <property type="entry name" value="GPCR_3_C"/>
</dbReference>
<dbReference type="InterPro" id="IPR051753">
    <property type="entry name" value="RA-inducible_GPCR3"/>
</dbReference>
<dbReference type="PANTHER" id="PTHR14511">
    <property type="entry name" value="G PROTEIN COUPLED RECEPTOR, CLASS C, GROUP 5"/>
    <property type="match status" value="1"/>
</dbReference>
<dbReference type="PANTHER" id="PTHR14511:SF7">
    <property type="entry name" value="RETINOIC ACID-INDUCED PROTEIN 3"/>
    <property type="match status" value="1"/>
</dbReference>
<dbReference type="Pfam" id="PF00003">
    <property type="entry name" value="7tm_3"/>
    <property type="match status" value="1"/>
</dbReference>
<gene>
    <name type="primary">GPRC5A</name>
    <name type="synonym">GPCR5A</name>
    <name type="synonym">RAI3</name>
    <name type="synonym">RAIG1</name>
</gene>
<organism>
    <name type="scientific">Homo sapiens</name>
    <name type="common">Human</name>
    <dbReference type="NCBI Taxonomy" id="9606"/>
    <lineage>
        <taxon>Eukaryota</taxon>
        <taxon>Metazoa</taxon>
        <taxon>Chordata</taxon>
        <taxon>Craniata</taxon>
        <taxon>Vertebrata</taxon>
        <taxon>Euteleostomi</taxon>
        <taxon>Mammalia</taxon>
        <taxon>Eutheria</taxon>
        <taxon>Euarchontoglires</taxon>
        <taxon>Primates</taxon>
        <taxon>Haplorrhini</taxon>
        <taxon>Catarrhini</taxon>
        <taxon>Hominidae</taxon>
        <taxon>Homo</taxon>
    </lineage>
</organism>
<feature type="chain" id="PRO_0000206895" description="Retinoic acid-induced protein 3">
    <location>
        <begin position="1"/>
        <end position="357"/>
    </location>
</feature>
<feature type="topological domain" description="Extracellular" evidence="9">
    <location>
        <begin position="1"/>
        <end position="33"/>
    </location>
</feature>
<feature type="transmembrane region" description="Helical; Name=1" evidence="2">
    <location>
        <begin position="34"/>
        <end position="54"/>
    </location>
</feature>
<feature type="topological domain" description="Cytoplasmic" evidence="9">
    <location>
        <begin position="55"/>
        <end position="68"/>
    </location>
</feature>
<feature type="transmembrane region" description="Helical; Name=2" evidence="2">
    <location>
        <begin position="69"/>
        <end position="89"/>
    </location>
</feature>
<feature type="topological domain" description="Extracellular" evidence="9">
    <location>
        <begin position="90"/>
        <end position="97"/>
    </location>
</feature>
<feature type="transmembrane region" description="Helical; Name=3" evidence="2">
    <location>
        <begin position="98"/>
        <end position="118"/>
    </location>
</feature>
<feature type="topological domain" description="Cytoplasmic" evidence="9">
    <location>
        <begin position="119"/>
        <end position="129"/>
    </location>
</feature>
<feature type="transmembrane region" description="Helical; Name=4" evidence="2">
    <location>
        <begin position="130"/>
        <end position="150"/>
    </location>
</feature>
<feature type="topological domain" description="Extracellular" evidence="9">
    <location>
        <begin position="151"/>
        <end position="176"/>
    </location>
</feature>
<feature type="transmembrane region" description="Helical; Name=5" evidence="2">
    <location>
        <begin position="177"/>
        <end position="197"/>
    </location>
</feature>
<feature type="topological domain" description="Cytoplasmic" evidence="9">
    <location>
        <begin position="198"/>
        <end position="212"/>
    </location>
</feature>
<feature type="transmembrane region" description="Helical; Name=6" evidence="2">
    <location>
        <begin position="213"/>
        <end position="233"/>
    </location>
</feature>
<feature type="topological domain" description="Extracellular" evidence="9">
    <location>
        <begin position="234"/>
        <end position="247"/>
    </location>
</feature>
<feature type="transmembrane region" description="Helical; Name=7" evidence="2">
    <location>
        <begin position="248"/>
        <end position="268"/>
    </location>
</feature>
<feature type="topological domain" description="Cytoplasmic" evidence="9">
    <location>
        <begin position="269"/>
        <end position="357"/>
    </location>
</feature>
<feature type="modified residue" description="Phosphoserine" evidence="11">
    <location>
        <position position="301"/>
    </location>
</feature>
<feature type="modified residue" description="Phosphotyrosine" evidence="6">
    <location>
        <position position="317"/>
    </location>
</feature>
<feature type="modified residue" description="Phosphotyrosine" evidence="6">
    <location>
        <position position="320"/>
    </location>
</feature>
<feature type="modified residue" description="Phosphoserine" evidence="10 11 12">
    <location>
        <position position="345"/>
    </location>
</feature>
<feature type="modified residue" description="Phosphotyrosine" evidence="6 12">
    <location>
        <position position="347"/>
    </location>
</feature>
<feature type="modified residue" description="Phosphotyrosine" evidence="6">
    <location>
        <position position="350"/>
    </location>
</feature>
<feature type="glycosylation site" description="N-linked (GlcNAc...) asparagine" evidence="2">
    <location>
        <position position="158"/>
    </location>
</feature>
<feature type="sequence variant" id="VAR_049281" description="In dbSNP:rs11550683.">
    <original>C</original>
    <variation>F</variation>
    <location>
        <position position="9"/>
    </location>
</feature>
<feature type="sequence variant" id="VAR_018296" description="In dbSNP:rs850932.">
    <original>S</original>
    <variation>G</variation>
    <location>
        <position position="118"/>
    </location>
</feature>
<feature type="sequence variant" id="VAR_049282" description="In dbSNP:rs12368599.">
    <original>T</original>
    <variation>A</variation>
    <location>
        <position position="182"/>
    </location>
</feature>
<feature type="sequence conflict" description="In Ref. 1; AAM77594." evidence="9" ref="1">
    <original>S</original>
    <variation>G</variation>
    <location>
        <position position="292"/>
    </location>
</feature>